<evidence type="ECO:0000255" key="1">
    <source>
        <dbReference type="HAMAP-Rule" id="MF_01302"/>
    </source>
</evidence>
<evidence type="ECO:0000305" key="2"/>
<feature type="chain" id="PRO_0000290959" description="Small ribosomal subunit protein uS8">
    <location>
        <begin position="1"/>
        <end position="131"/>
    </location>
</feature>
<comment type="function">
    <text evidence="1">One of the primary rRNA binding proteins, it binds directly to 16S rRNA central domain where it helps coordinate assembly of the platform of the 30S subunit.</text>
</comment>
<comment type="subunit">
    <text evidence="1">Part of the 30S ribosomal subunit. Contacts proteins S5 and S12.</text>
</comment>
<comment type="similarity">
    <text evidence="1">Belongs to the universal ribosomal protein uS8 family.</text>
</comment>
<sequence length="131" mass="14795">MALSDSIGDFLARIRNAQLAMHKTTRVLFSKVNSSILKILKDEGYILDYQKEVVGNIPSFVVKLKYYERSPVISDIVRVSKPGCRCYSKYKDISKAYNGLGIFIISTSKGVMTDYDAHKLKFGGEILCRVF</sequence>
<keyword id="KW-1185">Reference proteome</keyword>
<keyword id="KW-0687">Ribonucleoprotein</keyword>
<keyword id="KW-0689">Ribosomal protein</keyword>
<keyword id="KW-0694">RNA-binding</keyword>
<keyword id="KW-0699">rRNA-binding</keyword>
<protein>
    <recommendedName>
        <fullName evidence="1">Small ribosomal subunit protein uS8</fullName>
    </recommendedName>
    <alternativeName>
        <fullName evidence="2">30S ribosomal protein S8</fullName>
    </alternativeName>
</protein>
<accession>Q5GSV8</accession>
<proteinExistence type="inferred from homology"/>
<gene>
    <name evidence="1" type="primary">rpsH</name>
    <name type="ordered locus">Wbm0327</name>
</gene>
<organism>
    <name type="scientific">Wolbachia sp. subsp. Brugia malayi (strain TRS)</name>
    <dbReference type="NCBI Taxonomy" id="292805"/>
    <lineage>
        <taxon>Bacteria</taxon>
        <taxon>Pseudomonadati</taxon>
        <taxon>Pseudomonadota</taxon>
        <taxon>Alphaproteobacteria</taxon>
        <taxon>Rickettsiales</taxon>
        <taxon>Anaplasmataceae</taxon>
        <taxon>Wolbachieae</taxon>
        <taxon>Wolbachia</taxon>
    </lineage>
</organism>
<name>RS8_WOLTR</name>
<reference key="1">
    <citation type="journal article" date="2005" name="PLoS Biol.">
        <title>The Wolbachia genome of Brugia malayi: endosymbiont evolution within a human pathogenic nematode.</title>
        <authorList>
            <person name="Foster J."/>
            <person name="Ganatra M."/>
            <person name="Kamal I."/>
            <person name="Ware J."/>
            <person name="Makarova K."/>
            <person name="Ivanova N."/>
            <person name="Bhattacharyya A."/>
            <person name="Kapatral V."/>
            <person name="Kumar S."/>
            <person name="Posfai J."/>
            <person name="Vincze T."/>
            <person name="Ingram J."/>
            <person name="Moran L."/>
            <person name="Lapidus A."/>
            <person name="Omelchenko M."/>
            <person name="Kyrpides N."/>
            <person name="Ghedin E."/>
            <person name="Wang S."/>
            <person name="Goltsman E."/>
            <person name="Joukov V."/>
            <person name="Ostrovskaya O."/>
            <person name="Tsukerman K."/>
            <person name="Mazur M."/>
            <person name="Comb D."/>
            <person name="Koonin E."/>
            <person name="Slatko B."/>
        </authorList>
    </citation>
    <scope>NUCLEOTIDE SEQUENCE [LARGE SCALE GENOMIC DNA]</scope>
    <source>
        <strain>TRS</strain>
    </source>
</reference>
<dbReference type="EMBL" id="AE017321">
    <property type="protein sequence ID" value="AAW70916.1"/>
    <property type="molecule type" value="Genomic_DNA"/>
</dbReference>
<dbReference type="RefSeq" id="WP_011256526.1">
    <property type="nucleotide sequence ID" value="NC_006833.1"/>
</dbReference>
<dbReference type="SMR" id="Q5GSV8"/>
<dbReference type="STRING" id="292805.Wbm0327"/>
<dbReference type="KEGG" id="wbm:Wbm0327"/>
<dbReference type="eggNOG" id="COG0096">
    <property type="taxonomic scope" value="Bacteria"/>
</dbReference>
<dbReference type="HOGENOM" id="CLU_098428_0_0_5"/>
<dbReference type="Proteomes" id="UP000000534">
    <property type="component" value="Chromosome"/>
</dbReference>
<dbReference type="GO" id="GO:1990904">
    <property type="term" value="C:ribonucleoprotein complex"/>
    <property type="evidence" value="ECO:0007669"/>
    <property type="project" value="UniProtKB-KW"/>
</dbReference>
<dbReference type="GO" id="GO:0005840">
    <property type="term" value="C:ribosome"/>
    <property type="evidence" value="ECO:0007669"/>
    <property type="project" value="UniProtKB-KW"/>
</dbReference>
<dbReference type="GO" id="GO:0019843">
    <property type="term" value="F:rRNA binding"/>
    <property type="evidence" value="ECO:0007669"/>
    <property type="project" value="UniProtKB-UniRule"/>
</dbReference>
<dbReference type="GO" id="GO:0003735">
    <property type="term" value="F:structural constituent of ribosome"/>
    <property type="evidence" value="ECO:0007669"/>
    <property type="project" value="InterPro"/>
</dbReference>
<dbReference type="GO" id="GO:0006412">
    <property type="term" value="P:translation"/>
    <property type="evidence" value="ECO:0007669"/>
    <property type="project" value="UniProtKB-UniRule"/>
</dbReference>
<dbReference type="FunFam" id="3.30.1490.10:FF:000001">
    <property type="entry name" value="30S ribosomal protein S8"/>
    <property type="match status" value="1"/>
</dbReference>
<dbReference type="Gene3D" id="3.30.1370.30">
    <property type="match status" value="1"/>
</dbReference>
<dbReference type="Gene3D" id="3.30.1490.10">
    <property type="match status" value="1"/>
</dbReference>
<dbReference type="HAMAP" id="MF_01302_B">
    <property type="entry name" value="Ribosomal_uS8_B"/>
    <property type="match status" value="1"/>
</dbReference>
<dbReference type="InterPro" id="IPR000630">
    <property type="entry name" value="Ribosomal_uS8"/>
</dbReference>
<dbReference type="InterPro" id="IPR047863">
    <property type="entry name" value="Ribosomal_uS8_CS"/>
</dbReference>
<dbReference type="InterPro" id="IPR035987">
    <property type="entry name" value="Ribosomal_uS8_sf"/>
</dbReference>
<dbReference type="NCBIfam" id="NF001109">
    <property type="entry name" value="PRK00136.1"/>
    <property type="match status" value="1"/>
</dbReference>
<dbReference type="PANTHER" id="PTHR11758">
    <property type="entry name" value="40S RIBOSOMAL PROTEIN S15A"/>
    <property type="match status" value="1"/>
</dbReference>
<dbReference type="Pfam" id="PF00410">
    <property type="entry name" value="Ribosomal_S8"/>
    <property type="match status" value="1"/>
</dbReference>
<dbReference type="SUPFAM" id="SSF56047">
    <property type="entry name" value="Ribosomal protein S8"/>
    <property type="match status" value="1"/>
</dbReference>
<dbReference type="PROSITE" id="PS00053">
    <property type="entry name" value="RIBOSOMAL_S8"/>
    <property type="match status" value="1"/>
</dbReference>